<sequence length="111" mass="12567">MLLKSTTRHVHIYAGHVVDGEVHPDTETLTLNVDPDNELEWNEAALAKVEAKFRELVANAAGEDLTEYNLRRIGSDLEHFIRSLLMQGEIGYNLNSRVRNYSLGIPRVNHS</sequence>
<reference key="1">
    <citation type="journal article" date="2002" name="DNA Res.">
        <title>Complete genome structure of the thermophilic cyanobacterium Thermosynechococcus elongatus BP-1.</title>
        <authorList>
            <person name="Nakamura Y."/>
            <person name="Kaneko T."/>
            <person name="Sato S."/>
            <person name="Ikeuchi M."/>
            <person name="Katoh H."/>
            <person name="Sasamoto S."/>
            <person name="Watanabe A."/>
            <person name="Iriguchi M."/>
            <person name="Kawashima K."/>
            <person name="Kimura T."/>
            <person name="Kishida Y."/>
            <person name="Kiyokawa C."/>
            <person name="Kohara M."/>
            <person name="Matsumoto M."/>
            <person name="Matsuno A."/>
            <person name="Nakazaki N."/>
            <person name="Shimpo S."/>
            <person name="Sugimoto M."/>
            <person name="Takeuchi C."/>
            <person name="Yamada M."/>
            <person name="Tabata S."/>
        </authorList>
    </citation>
    <scope>NUCLEOTIDE SEQUENCE [LARGE SCALE GENOMIC DNA]</scope>
    <source>
        <strain>NIES-2133 / IAM M-273 / BP-1</strain>
    </source>
</reference>
<reference key="2">
    <citation type="journal article" date="2005" name="Biochem. J.">
        <title>Isolation, subunit composition and interaction of the NDH-1 complexes from Thermosynechococcus elongatus BP-1.</title>
        <authorList>
            <person name="Zhang P."/>
            <person name="Battchikova N."/>
            <person name="Paakkarinen V."/>
            <person name="Katoh H."/>
            <person name="Iwai M."/>
            <person name="Ikeuchi M."/>
            <person name="Pakrasi H.B."/>
            <person name="Ogawa T."/>
            <person name="Aro E.-M."/>
        </authorList>
    </citation>
    <scope>IDENTIFICATION BY MASS SPECTROMETRY</scope>
    <scope>CHARACTERIZATION AS A MEMBER OF THE NAD(P)H-QUINONE OXIDOREDUCTASE COMPLEX</scope>
    <scope>SUBCOMPLEXES OF NDH-1</scope>
</reference>
<keyword id="KW-0002">3D-structure</keyword>
<keyword id="KW-0472">Membrane</keyword>
<keyword id="KW-0520">NAD</keyword>
<keyword id="KW-0521">NADP</keyword>
<keyword id="KW-0618">Plastoquinone</keyword>
<keyword id="KW-0874">Quinone</keyword>
<keyword id="KW-1185">Reference proteome</keyword>
<keyword id="KW-0793">Thylakoid</keyword>
<keyword id="KW-1278">Translocase</keyword>
<keyword id="KW-0813">Transport</keyword>
<feature type="chain" id="PRO_0000352198" description="NAD(P)H-quinone oxidoreductase subunit M">
    <location>
        <begin position="1"/>
        <end position="111"/>
    </location>
</feature>
<feature type="strand" evidence="5">
    <location>
        <begin position="4"/>
        <end position="6"/>
    </location>
</feature>
<feature type="strand" evidence="6">
    <location>
        <begin position="10"/>
        <end position="12"/>
    </location>
</feature>
<feature type="strand" evidence="3">
    <location>
        <begin position="14"/>
        <end position="24"/>
    </location>
</feature>
<feature type="strand" evidence="3">
    <location>
        <begin position="26"/>
        <end position="29"/>
    </location>
</feature>
<feature type="strand" evidence="6">
    <location>
        <begin position="31"/>
        <end position="33"/>
    </location>
</feature>
<feature type="strand" evidence="4">
    <location>
        <begin position="36"/>
        <end position="39"/>
    </location>
</feature>
<feature type="helix" evidence="3">
    <location>
        <begin position="45"/>
        <end position="59"/>
    </location>
</feature>
<feature type="turn" evidence="3">
    <location>
        <begin position="60"/>
        <end position="62"/>
    </location>
</feature>
<feature type="strand" evidence="5">
    <location>
        <begin position="63"/>
        <end position="66"/>
    </location>
</feature>
<feature type="helix" evidence="3">
    <location>
        <begin position="67"/>
        <end position="86"/>
    </location>
</feature>
<feature type="strand" evidence="5">
    <location>
        <begin position="89"/>
        <end position="92"/>
    </location>
</feature>
<feature type="strand" evidence="3">
    <location>
        <begin position="94"/>
        <end position="97"/>
    </location>
</feature>
<feature type="strand" evidence="5">
    <location>
        <begin position="107"/>
        <end position="109"/>
    </location>
</feature>
<proteinExistence type="evidence at protein level"/>
<accession>Q8DLN5</accession>
<gene>
    <name type="primary">ndhM</name>
    <name type="ordered locus">tll0447</name>
</gene>
<evidence type="ECO:0000250" key="1"/>
<evidence type="ECO:0000305" key="2"/>
<evidence type="ECO:0007829" key="3">
    <source>
        <dbReference type="PDB" id="6KHI"/>
    </source>
</evidence>
<evidence type="ECO:0007829" key="4">
    <source>
        <dbReference type="PDB" id="6L7O"/>
    </source>
</evidence>
<evidence type="ECO:0007829" key="5">
    <source>
        <dbReference type="PDB" id="6NBQ"/>
    </source>
</evidence>
<evidence type="ECO:0007829" key="6">
    <source>
        <dbReference type="PDB" id="6TJV"/>
    </source>
</evidence>
<dbReference type="EC" id="7.1.1.-"/>
<dbReference type="EMBL" id="BA000039">
    <property type="protein sequence ID" value="BAC07999.1"/>
    <property type="molecule type" value="Genomic_DNA"/>
</dbReference>
<dbReference type="RefSeq" id="NP_681237.1">
    <property type="nucleotide sequence ID" value="NC_004113.1"/>
</dbReference>
<dbReference type="RefSeq" id="WP_011056300.1">
    <property type="nucleotide sequence ID" value="NC_004113.1"/>
</dbReference>
<dbReference type="PDB" id="6HUM">
    <property type="method" value="EM"/>
    <property type="resolution" value="3.34 A"/>
    <property type="chains" value="M=1-111"/>
</dbReference>
<dbReference type="PDB" id="6KHI">
    <property type="method" value="EM"/>
    <property type="resolution" value="3.00 A"/>
    <property type="chains" value="M=1-111"/>
</dbReference>
<dbReference type="PDB" id="6KHJ">
    <property type="method" value="EM"/>
    <property type="resolution" value="3.00 A"/>
    <property type="chains" value="M=1-111"/>
</dbReference>
<dbReference type="PDB" id="6L7O">
    <property type="method" value="EM"/>
    <property type="resolution" value="3.20 A"/>
    <property type="chains" value="M=1-111"/>
</dbReference>
<dbReference type="PDB" id="6L7P">
    <property type="method" value="EM"/>
    <property type="resolution" value="3.60 A"/>
    <property type="chains" value="M=1-111"/>
</dbReference>
<dbReference type="PDB" id="6NBQ">
    <property type="method" value="EM"/>
    <property type="resolution" value="3.10 A"/>
    <property type="chains" value="M=1-111"/>
</dbReference>
<dbReference type="PDB" id="6NBX">
    <property type="method" value="EM"/>
    <property type="resolution" value="3.50 A"/>
    <property type="chains" value="M=1-111"/>
</dbReference>
<dbReference type="PDB" id="6NBY">
    <property type="method" value="EM"/>
    <property type="resolution" value="3.10 A"/>
    <property type="chains" value="M=1-111"/>
</dbReference>
<dbReference type="PDB" id="6TJV">
    <property type="method" value="EM"/>
    <property type="resolution" value="3.20 A"/>
    <property type="chains" value="M=1-111"/>
</dbReference>
<dbReference type="PDBsum" id="6HUM"/>
<dbReference type="PDBsum" id="6KHI"/>
<dbReference type="PDBsum" id="6KHJ"/>
<dbReference type="PDBsum" id="6L7O"/>
<dbReference type="PDBsum" id="6L7P"/>
<dbReference type="PDBsum" id="6NBQ"/>
<dbReference type="PDBsum" id="6NBX"/>
<dbReference type="PDBsum" id="6NBY"/>
<dbReference type="PDBsum" id="6TJV"/>
<dbReference type="EMDB" id="EMD-0281"/>
<dbReference type="EMDB" id="EMD-0415"/>
<dbReference type="EMDB" id="EMD-0425"/>
<dbReference type="EMDB" id="EMD-0849"/>
<dbReference type="EMDB" id="EMD-0850"/>
<dbReference type="EMDB" id="EMD-10513"/>
<dbReference type="EMDB" id="EMD-9989"/>
<dbReference type="EMDB" id="EMD-9990"/>
<dbReference type="SMR" id="Q8DLN5"/>
<dbReference type="IntAct" id="Q8DLN5">
    <property type="interactions" value="1"/>
</dbReference>
<dbReference type="STRING" id="197221.gene:10747036"/>
<dbReference type="TCDB" id="3.D.1.8.2">
    <property type="family name" value="the h+ or na+-translocating nadh dehydrogenase (ndh) family"/>
</dbReference>
<dbReference type="EnsemblBacteria" id="BAC07999">
    <property type="protein sequence ID" value="BAC07999"/>
    <property type="gene ID" value="BAC07999"/>
</dbReference>
<dbReference type="KEGG" id="tel:tll0447"/>
<dbReference type="PATRIC" id="fig|197221.4.peg.471"/>
<dbReference type="eggNOG" id="ENOG5031AQM">
    <property type="taxonomic scope" value="Bacteria"/>
</dbReference>
<dbReference type="Proteomes" id="UP000000440">
    <property type="component" value="Chromosome"/>
</dbReference>
<dbReference type="GO" id="GO:0031676">
    <property type="term" value="C:plasma membrane-derived thylakoid membrane"/>
    <property type="evidence" value="ECO:0007669"/>
    <property type="project" value="UniProtKB-SubCell"/>
</dbReference>
<dbReference type="GO" id="GO:0016655">
    <property type="term" value="F:oxidoreductase activity, acting on NAD(P)H, quinone or similar compound as acceptor"/>
    <property type="evidence" value="ECO:0007669"/>
    <property type="project" value="UniProtKB-UniRule"/>
</dbReference>
<dbReference type="GO" id="GO:0048038">
    <property type="term" value="F:quinone binding"/>
    <property type="evidence" value="ECO:0007669"/>
    <property type="project" value="UniProtKB-KW"/>
</dbReference>
<dbReference type="HAMAP" id="MF_01352">
    <property type="entry name" value="NDH1_NDH1M"/>
    <property type="match status" value="1"/>
</dbReference>
<dbReference type="InterPro" id="IPR018922">
    <property type="entry name" value="NdhM"/>
</dbReference>
<dbReference type="PANTHER" id="PTHR36900">
    <property type="entry name" value="NAD(P)H-QUINONE OXIDOREDUCTASE SUBUNIT M, CHLOROPLASTIC"/>
    <property type="match status" value="1"/>
</dbReference>
<dbReference type="PANTHER" id="PTHR36900:SF1">
    <property type="entry name" value="NAD(P)H-QUINONE OXIDOREDUCTASE SUBUNIT M, CHLOROPLASTIC"/>
    <property type="match status" value="1"/>
</dbReference>
<dbReference type="Pfam" id="PF10664">
    <property type="entry name" value="NdhM"/>
    <property type="match status" value="1"/>
</dbReference>
<name>NDHM_THEVB</name>
<organism>
    <name type="scientific">Thermosynechococcus vestitus (strain NIES-2133 / IAM M-273 / BP-1)</name>
    <dbReference type="NCBI Taxonomy" id="197221"/>
    <lineage>
        <taxon>Bacteria</taxon>
        <taxon>Bacillati</taxon>
        <taxon>Cyanobacteriota</taxon>
        <taxon>Cyanophyceae</taxon>
        <taxon>Acaryochloridales</taxon>
        <taxon>Thermosynechococcaceae</taxon>
        <taxon>Thermosynechococcus</taxon>
    </lineage>
</organism>
<comment type="function">
    <text evidence="1">NDH-1 shuttles electrons from an unknown electron donor, via FMN and iron-sulfur (Fe-S) centers, to quinones in the respiratory and/or the photosynthetic chain. The immediate electron acceptor for the enzyme in this species is believed to be plastoquinone. Couples the redox reaction to proton translocation, and thus conserves the redox energy in a proton gradient. Cyanobacterial NDH-1 also plays a role in inorganic carbon-concentration (By similarity).</text>
</comment>
<comment type="catalytic activity">
    <reaction>
        <text>a plastoquinone + NADH + (n+1) H(+)(in) = a plastoquinol + NAD(+) + n H(+)(out)</text>
        <dbReference type="Rhea" id="RHEA:42608"/>
        <dbReference type="Rhea" id="RHEA-COMP:9561"/>
        <dbReference type="Rhea" id="RHEA-COMP:9562"/>
        <dbReference type="ChEBI" id="CHEBI:15378"/>
        <dbReference type="ChEBI" id="CHEBI:17757"/>
        <dbReference type="ChEBI" id="CHEBI:57540"/>
        <dbReference type="ChEBI" id="CHEBI:57945"/>
        <dbReference type="ChEBI" id="CHEBI:62192"/>
    </reaction>
</comment>
<comment type="catalytic activity">
    <reaction>
        <text>a plastoquinone + NADPH + (n+1) H(+)(in) = a plastoquinol + NADP(+) + n H(+)(out)</text>
        <dbReference type="Rhea" id="RHEA:42612"/>
        <dbReference type="Rhea" id="RHEA-COMP:9561"/>
        <dbReference type="Rhea" id="RHEA-COMP:9562"/>
        <dbReference type="ChEBI" id="CHEBI:15378"/>
        <dbReference type="ChEBI" id="CHEBI:17757"/>
        <dbReference type="ChEBI" id="CHEBI:57783"/>
        <dbReference type="ChEBI" id="CHEBI:58349"/>
        <dbReference type="ChEBI" id="CHEBI:62192"/>
    </reaction>
</comment>
<comment type="subunit">
    <text>NDH-1 can be composed of about 15 different subunits; different subcomplexes with different compositions have been identified which probably have different functions.</text>
</comment>
<comment type="subcellular location">
    <subcellularLocation>
        <location evidence="2">Cellular thylakoid membrane</location>
        <topology evidence="2">Peripheral membrane protein</topology>
        <orientation evidence="2">Cytoplasmic side</orientation>
    </subcellularLocation>
</comment>
<comment type="similarity">
    <text evidence="2">Belongs to the complex I NdhM subunit family.</text>
</comment>
<protein>
    <recommendedName>
        <fullName>NAD(P)H-quinone oxidoreductase subunit M</fullName>
        <ecNumber>7.1.1.-</ecNumber>
    </recommendedName>
    <alternativeName>
        <fullName>NAD(P)H dehydrogenase I subunit M</fullName>
        <shortName>NDH-1 subunit M</shortName>
        <shortName>NDH-M</shortName>
    </alternativeName>
</protein>